<protein>
    <recommendedName>
        <fullName>Protein HemY</fullName>
    </recommendedName>
</protein>
<feature type="chain" id="PRO_0000135275" description="Protein HemY">
    <location>
        <begin position="1"/>
        <end position="398"/>
    </location>
</feature>
<feature type="topological domain" description="Cytoplasmic" evidence="1">
    <location>
        <begin position="1"/>
        <end position="4"/>
    </location>
</feature>
<feature type="transmembrane region" description="Helical" evidence="1">
    <location>
        <begin position="5"/>
        <end position="27"/>
    </location>
</feature>
<feature type="topological domain" description="Periplasmic" evidence="1">
    <location>
        <begin position="28"/>
        <end position="39"/>
    </location>
</feature>
<feature type="transmembrane region" description="Helical" evidence="1">
    <location>
        <begin position="40"/>
        <end position="62"/>
    </location>
</feature>
<feature type="topological domain" description="Cytoplasmic" evidence="1">
    <location>
        <begin position="63"/>
        <end position="398"/>
    </location>
</feature>
<feature type="repeat" description="TPR 1">
    <location>
        <begin position="118"/>
        <end position="151"/>
    </location>
</feature>
<feature type="repeat" description="TPR 2">
    <location>
        <begin position="328"/>
        <end position="361"/>
    </location>
</feature>
<sequence length="398" mass="45245">MLKVLLLFVLLIAGIVVGPMIAGHQGYVLIQTDNYNIETSVTGLAIILILAMVVLFAIEWLLRRIFRTGAHTRGWFVGRKRRRARKQTEQALLKLAEGDYQQVEKLMAKNADHAEQPVVNYLLAAEAAQQRGDEARANQHLERAAELAGNDTIPVEITRVRLQLARNENHAARHGVDKLLEVTPRHPEVLRLAEQAYIRTGAWSSLLDIIPSMAKAHVGDEEHRAMLEQQAWIGLMDQARADNGSEGLRNWWKNQSRKTRHQVALQVAMAEHLIECDDHDTAQQIIIDGLKRQYDDRLLLPIPRLKTNNPEQLEKVLRQQIKNVGDRPLLWSTLGQSLMKHGEWQEASLAFRAALKQRPDAYDYAWLADALDRLHKPEEAAAMRRDGLMLTLQNNPPQ</sequence>
<organism>
    <name type="scientific">Escherichia coli (strain K12)</name>
    <dbReference type="NCBI Taxonomy" id="83333"/>
    <lineage>
        <taxon>Bacteria</taxon>
        <taxon>Pseudomonadati</taxon>
        <taxon>Pseudomonadota</taxon>
        <taxon>Gammaproteobacteria</taxon>
        <taxon>Enterobacterales</taxon>
        <taxon>Enterobacteriaceae</taxon>
        <taxon>Escherichia</taxon>
    </lineage>
</organism>
<keyword id="KW-0997">Cell inner membrane</keyword>
<keyword id="KW-1003">Cell membrane</keyword>
<keyword id="KW-0472">Membrane</keyword>
<keyword id="KW-0627">Porphyrin biosynthesis</keyword>
<keyword id="KW-1185">Reference proteome</keyword>
<keyword id="KW-0677">Repeat</keyword>
<keyword id="KW-0802">TPR repeat</keyword>
<keyword id="KW-0812">Transmembrane</keyword>
<keyword id="KW-1133">Transmembrane helix</keyword>
<reference key="1">
    <citation type="journal article" date="1988" name="Nucleic Acids Res.">
        <title>The sequence of hemC, hemD and two additional E. coli genes.</title>
        <authorList>
            <person name="Alefounder P.R."/>
            <person name="Abell C."/>
            <person name="Battersby A.R."/>
        </authorList>
    </citation>
    <scope>NUCLEOTIDE SEQUENCE [GENOMIC DNA]</scope>
    <source>
        <strain>K12 / CS520</strain>
    </source>
</reference>
<reference key="2">
    <citation type="journal article" date="1992" name="Science">
        <title>Analysis of the Escherichia coli genome: DNA sequence of the region from 84.5 to 86.5 minutes.</title>
        <authorList>
            <person name="Daniels D.L."/>
            <person name="Plunkett G. III"/>
            <person name="Burland V.D."/>
            <person name="Blattner F.R."/>
        </authorList>
    </citation>
    <scope>NUCLEOTIDE SEQUENCE [LARGE SCALE GENOMIC DNA]</scope>
    <source>
        <strain>K12 / MG1655 / ATCC 47076</strain>
    </source>
</reference>
<reference key="3">
    <citation type="journal article" date="1997" name="Science">
        <title>The complete genome sequence of Escherichia coli K-12.</title>
        <authorList>
            <person name="Blattner F.R."/>
            <person name="Plunkett G. III"/>
            <person name="Bloch C.A."/>
            <person name="Perna N.T."/>
            <person name="Burland V."/>
            <person name="Riley M."/>
            <person name="Collado-Vides J."/>
            <person name="Glasner J.D."/>
            <person name="Rode C.K."/>
            <person name="Mayhew G.F."/>
            <person name="Gregor J."/>
            <person name="Davis N.W."/>
            <person name="Kirkpatrick H.A."/>
            <person name="Goeden M.A."/>
            <person name="Rose D.J."/>
            <person name="Mau B."/>
            <person name="Shao Y."/>
        </authorList>
    </citation>
    <scope>NUCLEOTIDE SEQUENCE [LARGE SCALE GENOMIC DNA]</scope>
    <source>
        <strain>K12 / MG1655 / ATCC 47076</strain>
    </source>
</reference>
<reference key="4">
    <citation type="journal article" date="2006" name="Mol. Syst. Biol.">
        <title>Highly accurate genome sequences of Escherichia coli K-12 strains MG1655 and W3110.</title>
        <authorList>
            <person name="Hayashi K."/>
            <person name="Morooka N."/>
            <person name="Yamamoto Y."/>
            <person name="Fujita K."/>
            <person name="Isono K."/>
            <person name="Choi S."/>
            <person name="Ohtsubo E."/>
            <person name="Baba T."/>
            <person name="Wanner B.L."/>
            <person name="Mori H."/>
            <person name="Horiuchi T."/>
        </authorList>
    </citation>
    <scope>NUCLEOTIDE SEQUENCE [LARGE SCALE GENOMIC DNA]</scope>
    <source>
        <strain>K12 / W3110 / ATCC 27325 / DSM 5911</strain>
    </source>
</reference>
<reference key="5">
    <citation type="journal article" date="2005" name="Science">
        <title>Global topology analysis of the Escherichia coli inner membrane proteome.</title>
        <authorList>
            <person name="Daley D.O."/>
            <person name="Rapp M."/>
            <person name="Granseth E."/>
            <person name="Melen K."/>
            <person name="Drew D."/>
            <person name="von Heijne G."/>
        </authorList>
    </citation>
    <scope>TOPOLOGY [LARGE SCALE ANALYSIS]</scope>
    <source>
        <strain>K12 / MG1655 / ATCC 47076</strain>
    </source>
</reference>
<accession>P0ACB7</accession>
<accession>P09128</accession>
<accession>Q2M8A7</accession>
<evidence type="ECO:0000255" key="1"/>
<comment type="function">
    <text>Involved in a late step of protoheme IX synthesis.</text>
</comment>
<comment type="pathway">
    <text>Porphyrin-containing compound metabolism; protoheme biosynthesis.</text>
</comment>
<comment type="subcellular location">
    <subcellularLocation>
        <location>Cell inner membrane</location>
        <topology>Multi-pass membrane protein</topology>
    </subcellularLocation>
</comment>
<dbReference type="EMBL" id="X12614">
    <property type="protein sequence ID" value="CAA31135.1"/>
    <property type="molecule type" value="Genomic_DNA"/>
</dbReference>
<dbReference type="EMBL" id="M87049">
    <property type="protein sequence ID" value="AAA67598.1"/>
    <property type="molecule type" value="Genomic_DNA"/>
</dbReference>
<dbReference type="EMBL" id="U00096">
    <property type="protein sequence ID" value="AAC76805.1"/>
    <property type="molecule type" value="Genomic_DNA"/>
</dbReference>
<dbReference type="EMBL" id="AP009048">
    <property type="protein sequence ID" value="BAE77499.1"/>
    <property type="molecule type" value="Genomic_DNA"/>
</dbReference>
<dbReference type="PIR" id="S01694">
    <property type="entry name" value="S01694"/>
</dbReference>
<dbReference type="RefSeq" id="NP_418246.1">
    <property type="nucleotide sequence ID" value="NC_000913.3"/>
</dbReference>
<dbReference type="RefSeq" id="WP_000921791.1">
    <property type="nucleotide sequence ID" value="NZ_STEB01000021.1"/>
</dbReference>
<dbReference type="SMR" id="P0ACB7"/>
<dbReference type="BioGRID" id="4262608">
    <property type="interactions" value="183"/>
</dbReference>
<dbReference type="DIP" id="DIP-47881N"/>
<dbReference type="FunCoup" id="P0ACB7">
    <property type="interactions" value="157"/>
</dbReference>
<dbReference type="IntAct" id="P0ACB7">
    <property type="interactions" value="3"/>
</dbReference>
<dbReference type="STRING" id="511145.b3802"/>
<dbReference type="jPOST" id="P0ACB7"/>
<dbReference type="PaxDb" id="511145-b3802"/>
<dbReference type="EnsemblBacteria" id="AAC76805">
    <property type="protein sequence ID" value="AAC76805"/>
    <property type="gene ID" value="b3802"/>
</dbReference>
<dbReference type="GeneID" id="93778142"/>
<dbReference type="GeneID" id="948311"/>
<dbReference type="KEGG" id="ecj:JW3774"/>
<dbReference type="KEGG" id="eco:b3802"/>
<dbReference type="KEGG" id="ecoc:C3026_20585"/>
<dbReference type="PATRIC" id="fig|1411691.4.peg.2906"/>
<dbReference type="EchoBASE" id="EB0429"/>
<dbReference type="eggNOG" id="COG3071">
    <property type="taxonomic scope" value="Bacteria"/>
</dbReference>
<dbReference type="HOGENOM" id="CLU_037501_2_0_6"/>
<dbReference type="InParanoid" id="P0ACB7"/>
<dbReference type="OMA" id="QAYIGLM"/>
<dbReference type="OrthoDB" id="7067577at2"/>
<dbReference type="PhylomeDB" id="P0ACB7"/>
<dbReference type="BioCyc" id="EcoCyc:EG10434-MONOMER"/>
<dbReference type="UniPathway" id="UPA00252"/>
<dbReference type="PRO" id="PR:P0ACB7"/>
<dbReference type="Proteomes" id="UP000000625">
    <property type="component" value="Chromosome"/>
</dbReference>
<dbReference type="GO" id="GO:0005886">
    <property type="term" value="C:plasma membrane"/>
    <property type="evidence" value="ECO:0007669"/>
    <property type="project" value="UniProtKB-SubCell"/>
</dbReference>
<dbReference type="GO" id="GO:0042168">
    <property type="term" value="P:heme metabolic process"/>
    <property type="evidence" value="ECO:0007669"/>
    <property type="project" value="InterPro"/>
</dbReference>
<dbReference type="GO" id="GO:0006779">
    <property type="term" value="P:porphyrin-containing compound biosynthetic process"/>
    <property type="evidence" value="ECO:0007669"/>
    <property type="project" value="UniProtKB-KW"/>
</dbReference>
<dbReference type="Gene3D" id="1.25.40.10">
    <property type="entry name" value="Tetratricopeptide repeat domain"/>
    <property type="match status" value="2"/>
</dbReference>
<dbReference type="InterPro" id="IPR005254">
    <property type="entry name" value="Heme_biosyn_assoc_TPR_pro"/>
</dbReference>
<dbReference type="InterPro" id="IPR010817">
    <property type="entry name" value="HemY_N"/>
</dbReference>
<dbReference type="InterPro" id="IPR011990">
    <property type="entry name" value="TPR-like_helical_dom_sf"/>
</dbReference>
<dbReference type="InterPro" id="IPR013105">
    <property type="entry name" value="TPR_2"/>
</dbReference>
<dbReference type="InterPro" id="IPR019734">
    <property type="entry name" value="TPR_rpt"/>
</dbReference>
<dbReference type="NCBIfam" id="NF008017">
    <property type="entry name" value="PRK10747.1"/>
    <property type="match status" value="1"/>
</dbReference>
<dbReference type="NCBIfam" id="TIGR00540">
    <property type="entry name" value="TPR_hemY_coli"/>
    <property type="match status" value="1"/>
</dbReference>
<dbReference type="Pfam" id="PF07219">
    <property type="entry name" value="HemY_N"/>
    <property type="match status" value="1"/>
</dbReference>
<dbReference type="Pfam" id="PF07719">
    <property type="entry name" value="TPR_2"/>
    <property type="match status" value="1"/>
</dbReference>
<dbReference type="SUPFAM" id="SSF48452">
    <property type="entry name" value="TPR-like"/>
    <property type="match status" value="1"/>
</dbReference>
<dbReference type="PROSITE" id="PS50005">
    <property type="entry name" value="TPR"/>
    <property type="match status" value="2"/>
</dbReference>
<dbReference type="PROSITE" id="PS50293">
    <property type="entry name" value="TPR_REGION"/>
    <property type="match status" value="1"/>
</dbReference>
<gene>
    <name type="primary">hemY</name>
    <name type="ordered locus">b3802</name>
    <name type="ordered locus">JW3774</name>
</gene>
<name>HEMY_ECOLI</name>
<proteinExistence type="evidence at protein level"/>